<accession>O75795</accession>
<comment type="function">
    <text evidence="3 4 6 7 8">UDP-glucuronosyltransferase (UGT) that catalyzes phase II biotransformation reactions in which lipophilic substrates are conjugated with glucuronic acid to increase the metabolite's water solubility, thereby facilitating excretion into either the urine or bile (PubMed:16595710, PubMed:18719240, PubMed:19022937, PubMed:23288867, PubMed:8798464). Catalyzes the glucuronidation of endogenous steroid hormones such as androgens (epitestosterone, androsterone) and estrogens (estradiol, epiestradiol) (PubMed:16595710, PubMed:18719240, PubMed:19022937, PubMed:23288867, PubMed:8798464).</text>
</comment>
<comment type="catalytic activity">
    <reaction evidence="3 4 6 7 8">
        <text>glucuronate acceptor + UDP-alpha-D-glucuronate = acceptor beta-D-glucuronoside + UDP + H(+)</text>
        <dbReference type="Rhea" id="RHEA:21032"/>
        <dbReference type="ChEBI" id="CHEBI:15378"/>
        <dbReference type="ChEBI" id="CHEBI:58052"/>
        <dbReference type="ChEBI" id="CHEBI:58223"/>
        <dbReference type="ChEBI" id="CHEBI:132367"/>
        <dbReference type="ChEBI" id="CHEBI:132368"/>
        <dbReference type="EC" id="2.4.1.17"/>
    </reaction>
    <physiologicalReaction direction="left-to-right" evidence="11 12 13 14 15">
        <dbReference type="Rhea" id="RHEA:21033"/>
    </physiologicalReaction>
</comment>
<comment type="catalytic activity">
    <reaction evidence="7">
        <text>17alpha-estradiol + UDP-alpha-D-glucuronate = 17alpha-estradiol 3-O-(beta-D-glucuronate) + UDP + H(+)</text>
        <dbReference type="Rhea" id="RHEA:52868"/>
        <dbReference type="ChEBI" id="CHEBI:15378"/>
        <dbReference type="ChEBI" id="CHEBI:17160"/>
        <dbReference type="ChEBI" id="CHEBI:57529"/>
        <dbReference type="ChEBI" id="CHEBI:58052"/>
        <dbReference type="ChEBI" id="CHEBI:58223"/>
    </reaction>
    <physiologicalReaction direction="left-to-right" evidence="14">
        <dbReference type="Rhea" id="RHEA:52869"/>
    </physiologicalReaction>
</comment>
<comment type="catalytic activity">
    <reaction evidence="7">
        <text>17alpha-estradiol + UDP-alpha-D-glucuronate = 17alpha-estradiol 17-O-(beta-D-glucuronate) + UDP + H(+)</text>
        <dbReference type="Rhea" id="RHEA:52872"/>
        <dbReference type="ChEBI" id="CHEBI:15378"/>
        <dbReference type="ChEBI" id="CHEBI:17160"/>
        <dbReference type="ChEBI" id="CHEBI:58052"/>
        <dbReference type="ChEBI" id="CHEBI:58223"/>
        <dbReference type="ChEBI" id="CHEBI:136642"/>
    </reaction>
    <physiologicalReaction direction="left-to-right" evidence="14">
        <dbReference type="Rhea" id="RHEA:52873"/>
    </physiologicalReaction>
</comment>
<comment type="catalytic activity">
    <reaction evidence="4 7">
        <text>17beta-estradiol + UDP-alpha-D-glucuronate = 17beta-estradiol 17-O-(beta-D-glucuronate) + UDP + H(+)</text>
        <dbReference type="Rhea" id="RHEA:52464"/>
        <dbReference type="ChEBI" id="CHEBI:15378"/>
        <dbReference type="ChEBI" id="CHEBI:16469"/>
        <dbReference type="ChEBI" id="CHEBI:58052"/>
        <dbReference type="ChEBI" id="CHEBI:58223"/>
        <dbReference type="ChEBI" id="CHEBI:82961"/>
    </reaction>
    <physiologicalReaction direction="left-to-right" evidence="12 14">
        <dbReference type="Rhea" id="RHEA:52465"/>
    </physiologicalReaction>
</comment>
<comment type="catalytic activity">
    <reaction evidence="3">
        <text>17beta-hydroxy-5alpha-androstan-3-one + UDP-alpha-D-glucuronate = 5alpha-dihydrotestosterone 17-O-(beta-D-glucuronate) + UDP + H(+)</text>
        <dbReference type="Rhea" id="RHEA:53000"/>
        <dbReference type="ChEBI" id="CHEBI:15378"/>
        <dbReference type="ChEBI" id="CHEBI:16330"/>
        <dbReference type="ChEBI" id="CHEBI:58052"/>
        <dbReference type="ChEBI" id="CHEBI:58223"/>
        <dbReference type="ChEBI" id="CHEBI:136914"/>
    </reaction>
    <physiologicalReaction direction="left-to-right" evidence="11">
        <dbReference type="Rhea" id="RHEA:53001"/>
    </physiologicalReaction>
</comment>
<comment type="catalytic activity">
    <reaction evidence="6">
        <text>testosterone + UDP-alpha-D-glucuronate = testosterone 17-O-(beta-D-glucuronate) + UDP + H(+)</text>
        <dbReference type="Rhea" id="RHEA:52456"/>
        <dbReference type="ChEBI" id="CHEBI:15378"/>
        <dbReference type="ChEBI" id="CHEBI:17347"/>
        <dbReference type="ChEBI" id="CHEBI:58052"/>
        <dbReference type="ChEBI" id="CHEBI:58223"/>
        <dbReference type="ChEBI" id="CHEBI:136639"/>
    </reaction>
    <physiologicalReaction direction="left-to-right" evidence="13">
        <dbReference type="Rhea" id="RHEA:52457"/>
    </physiologicalReaction>
</comment>
<comment type="biophysicochemical properties">
    <kinetics>
        <KM evidence="4">11.4 uM for 17beta-estradiol/estradiol (when assaying glucuronidation at position 17)</KM>
        <KM evidence="6">10 uM for testosterone (when assaying glucuronidation at position 17)</KM>
        <KM evidence="8">3.4 uM for testosterone</KM>
        <KM evidence="8">0.7 uM for dihydrotestosterone</KM>
        <KM evidence="8">1 uM for androstane-3alpha,17beta-diol</KM>
        <Vmax evidence="4">327.0 pmol/min/mg enzyme for the formation of 17beta-estradiol 17-O-(beta-D-glucuronate)</Vmax>
        <Vmax evidence="7">3.8 pmol/min/mg enzyme for the formation of 16alpha,17beta-estriol 17-O-(beta-D-glucuronate)</Vmax>
        <Vmax evidence="7">5.4 pmol/min/mg enzyme for the formation of 16beta,17beta-estriol 16-O-(beta-D-glucuronate)</Vmax>
        <Vmax evidence="7">5.9 pmol/min/mg enzyme for the formation of 16beta,17beta-estriol 17-O-(beta-D-glucuronate)</Vmax>
        <Vmax evidence="7">38.2 pmol/min/mg enzyme for the formation of 17beta-estradiol 17-O-(beta-D-glucuronate)</Vmax>
        <Vmax evidence="7">59.8 pmol/min/mg enzyme for the formation of 17alpha-estradiol 3-O-(beta-D-glucuronate)</Vmax>
        <Vmax evidence="7">32.7 pmol/min/mg enzyme for the formation of 17alpha-estradiol 17-O-(beta-D-glucuronate)</Vmax>
        <Vmax evidence="3">1626.0 pmol/min/mg enzyme for the formation of 5alpha-dihydrotestosterone 17-O-(beta-D-glucuronate)</Vmax>
        <Vmax evidence="6">1002.0 pmol/min/mg enzyme for the formation of testosterone 17-O-(beta-D-glucuronate)</Vmax>
        <Vmax evidence="8">50.0 pmol/min/mg enzyme for the formation of testosterone</Vmax>
        <Vmax evidence="8">51.7 pmol/min/mg enzyme for the formation of dihydrotestosterone</Vmax>
        <Vmax evidence="8">36.7 pmol/min/mg enzyme for the formation of androstane-3alpha,17beta-diol glucuronide</Vmax>
        <text evidence="11">Some kinetic parameters were assessed using commercial enzymes, which may represent a mix of both active and inactive protein forms, and therefore modify the kinetic values.</text>
    </kinetics>
</comment>
<comment type="subcellular location">
    <subcellularLocation>
        <location evidence="14">Endoplasmic reticulum membrane</location>
        <topology evidence="2">Single-pass membrane protein</topology>
    </subcellularLocation>
</comment>
<comment type="tissue specificity">
    <text evidence="8">Expressed in various tissues including the liver, kidney, testis, uterus, placenta, mammary gland, adrenal gland, skin and prostate.</text>
</comment>
<comment type="polymorphism">
    <text evidence="5">Copy-number variation of UGT2B17 defines the bone mineral density quantitative trait locus 12 (BMND12) [MIM:612560]. Variance in bone mineral density is a susceptibility factor for osteoporotic fractures.</text>
</comment>
<comment type="similarity">
    <text evidence="10">Belongs to the UDP-glycosyltransferase family.</text>
</comment>
<dbReference type="EC" id="2.4.1.17" evidence="3 4 6 7 8"/>
<dbReference type="EMBL" id="U59209">
    <property type="protein sequence ID" value="AAC25491.1"/>
    <property type="molecule type" value="mRNA"/>
</dbReference>
<dbReference type="CCDS" id="CCDS3523.1"/>
<dbReference type="RefSeq" id="NP_001068.1">
    <property type="nucleotide sequence ID" value="NM_001077.4"/>
</dbReference>
<dbReference type="PDB" id="7YAN">
    <property type="method" value="X-ray"/>
    <property type="resolution" value="2.50 A"/>
    <property type="chains" value="A/B/C/D=284-451"/>
</dbReference>
<dbReference type="PDBsum" id="7YAN"/>
<dbReference type="SMR" id="O75795"/>
<dbReference type="BioGRID" id="113214">
    <property type="interactions" value="3"/>
</dbReference>
<dbReference type="FunCoup" id="O75795">
    <property type="interactions" value="327"/>
</dbReference>
<dbReference type="STRING" id="9606.ENSP00000320401"/>
<dbReference type="BindingDB" id="O75795"/>
<dbReference type="ChEMBL" id="CHEMBL4978"/>
<dbReference type="DrugBank" id="DB12597">
    <property type="generic name" value="Asciminib"/>
</dbReference>
<dbReference type="DrugBank" id="DB15463">
    <property type="generic name" value="Belzutifan"/>
</dbReference>
<dbReference type="DrugBank" id="DB09061">
    <property type="generic name" value="Cannabidiol"/>
</dbReference>
<dbReference type="DrugBank" id="DB06700">
    <property type="generic name" value="Desvenlafaxine"/>
</dbReference>
<dbReference type="DrugBank" id="DB00514">
    <property type="generic name" value="Dextromethorphan"/>
</dbReference>
<dbReference type="DrugBank" id="DB12243">
    <property type="generic name" value="Edaravone"/>
</dbReference>
<dbReference type="DrugBank" id="DB01241">
    <property type="generic name" value="Gemfibrozil"/>
</dbReference>
<dbReference type="DrugBank" id="DB00678">
    <property type="generic name" value="Losartan"/>
</dbReference>
<dbReference type="DrugBank" id="DB14009">
    <property type="generic name" value="Medical Cannabis"/>
</dbReference>
<dbReference type="DrugBank" id="DB00675">
    <property type="generic name" value="Tamoxifen"/>
</dbReference>
<dbReference type="DrugBank" id="DB15114">
    <property type="generic name" value="Vamorolone"/>
</dbReference>
<dbReference type="SwissLipids" id="SLP:000001696"/>
<dbReference type="CAZy" id="GT1">
    <property type="family name" value="Glycosyltransferase Family 1"/>
</dbReference>
<dbReference type="GlyCosmos" id="O75795">
    <property type="glycosylation" value="3 sites, No reported glycans"/>
</dbReference>
<dbReference type="GlyGen" id="O75795">
    <property type="glycosylation" value="3 sites"/>
</dbReference>
<dbReference type="iPTMnet" id="O75795"/>
<dbReference type="PhosphoSitePlus" id="O75795"/>
<dbReference type="SwissPalm" id="O75795"/>
<dbReference type="BioMuta" id="UGT2B17"/>
<dbReference type="jPOST" id="O75795"/>
<dbReference type="MassIVE" id="O75795"/>
<dbReference type="PaxDb" id="9606-ENSP00000320401"/>
<dbReference type="PeptideAtlas" id="O75795"/>
<dbReference type="ProteomicsDB" id="50199"/>
<dbReference type="Antibodypedia" id="44192">
    <property type="antibodies" value="29 antibodies from 18 providers"/>
</dbReference>
<dbReference type="DNASU" id="7367"/>
<dbReference type="Ensembl" id="ENST00000317746.3">
    <property type="protein sequence ID" value="ENSP00000320401.2"/>
    <property type="gene ID" value="ENSG00000197888.3"/>
</dbReference>
<dbReference type="GeneID" id="7367"/>
<dbReference type="KEGG" id="hsa:7367"/>
<dbReference type="MANE-Select" id="ENST00000317746.3">
    <property type="protein sequence ID" value="ENSP00000320401.2"/>
    <property type="RefSeq nucleotide sequence ID" value="NM_001077.4"/>
    <property type="RefSeq protein sequence ID" value="NP_001068.1"/>
</dbReference>
<dbReference type="UCSC" id="uc021xov.2">
    <property type="organism name" value="human"/>
</dbReference>
<dbReference type="AGR" id="HGNC:12547"/>
<dbReference type="CTD" id="7367"/>
<dbReference type="DisGeNET" id="7367"/>
<dbReference type="GeneCards" id="UGT2B17"/>
<dbReference type="HGNC" id="HGNC:12547">
    <property type="gene designation" value="UGT2B17"/>
</dbReference>
<dbReference type="HPA" id="ENSG00000197888">
    <property type="expression patterns" value="Group enriched (intestine, liver)"/>
</dbReference>
<dbReference type="MalaCards" id="UGT2B17"/>
<dbReference type="MIM" id="601903">
    <property type="type" value="gene"/>
</dbReference>
<dbReference type="MIM" id="612560">
    <property type="type" value="phenotype"/>
</dbReference>
<dbReference type="neXtProt" id="NX_O75795"/>
<dbReference type="OpenTargets" id="ENSG00000197888"/>
<dbReference type="PharmGKB" id="PA37189"/>
<dbReference type="VEuPathDB" id="HostDB:ENSG00000197888"/>
<dbReference type="eggNOG" id="KOG1192">
    <property type="taxonomic scope" value="Eukaryota"/>
</dbReference>
<dbReference type="GeneTree" id="ENSGT00940000163930"/>
<dbReference type="HOGENOM" id="CLU_012949_3_2_1"/>
<dbReference type="InParanoid" id="O75795"/>
<dbReference type="OMA" id="GSHYIAM"/>
<dbReference type="OrthoDB" id="5835829at2759"/>
<dbReference type="PAN-GO" id="O75795">
    <property type="GO annotations" value="3 GO annotations based on evolutionary models"/>
</dbReference>
<dbReference type="PhylomeDB" id="O75795"/>
<dbReference type="TreeFam" id="TF315472"/>
<dbReference type="BRENDA" id="2.4.1.17">
    <property type="organism ID" value="2681"/>
</dbReference>
<dbReference type="PathwayCommons" id="O75795"/>
<dbReference type="Reactome" id="R-HSA-156588">
    <property type="pathway name" value="Glucuronidation"/>
</dbReference>
<dbReference type="Reactome" id="R-HSA-9749641">
    <property type="pathway name" value="Aspirin ADME"/>
</dbReference>
<dbReference type="Reactome" id="R-HSA-9757110">
    <property type="pathway name" value="Prednisone ADME"/>
</dbReference>
<dbReference type="SABIO-RK" id="O75795"/>
<dbReference type="SignaLink" id="O75795"/>
<dbReference type="BioGRID-ORCS" id="7367">
    <property type="hits" value="12 hits in 1078 CRISPR screens"/>
</dbReference>
<dbReference type="GeneWiki" id="UGT2B17"/>
<dbReference type="GenomeRNAi" id="7367"/>
<dbReference type="Pharos" id="O75795">
    <property type="development level" value="Tbio"/>
</dbReference>
<dbReference type="PRO" id="PR:O75795"/>
<dbReference type="Proteomes" id="UP000005640">
    <property type="component" value="Chromosome 4"/>
</dbReference>
<dbReference type="RNAct" id="O75795">
    <property type="molecule type" value="protein"/>
</dbReference>
<dbReference type="Bgee" id="ENSG00000197888">
    <property type="expression patterns" value="Expressed in mucosa of transverse colon and 105 other cell types or tissues"/>
</dbReference>
<dbReference type="GO" id="GO:0005789">
    <property type="term" value="C:endoplasmic reticulum membrane"/>
    <property type="evidence" value="ECO:0000304"/>
    <property type="project" value="Reactome"/>
</dbReference>
<dbReference type="GO" id="GO:0016020">
    <property type="term" value="C:membrane"/>
    <property type="evidence" value="ECO:0000304"/>
    <property type="project" value="ProtInc"/>
</dbReference>
<dbReference type="GO" id="GO:0015020">
    <property type="term" value="F:glucuronosyltransferase activity"/>
    <property type="evidence" value="ECO:0000314"/>
    <property type="project" value="UniProtKB"/>
</dbReference>
<dbReference type="GO" id="GO:0008210">
    <property type="term" value="P:estrogen metabolic process"/>
    <property type="evidence" value="ECO:0000314"/>
    <property type="project" value="UniProtKB"/>
</dbReference>
<dbReference type="GO" id="GO:0008202">
    <property type="term" value="P:steroid metabolic process"/>
    <property type="evidence" value="ECO:0000304"/>
    <property type="project" value="ProtInc"/>
</dbReference>
<dbReference type="GO" id="GO:0006805">
    <property type="term" value="P:xenobiotic metabolic process"/>
    <property type="evidence" value="ECO:0000304"/>
    <property type="project" value="Reactome"/>
</dbReference>
<dbReference type="CDD" id="cd03784">
    <property type="entry name" value="GT1_Gtf-like"/>
    <property type="match status" value="1"/>
</dbReference>
<dbReference type="FunFam" id="3.40.50.2000:FF:000001">
    <property type="entry name" value="UDP-glucuronosyltransferase"/>
    <property type="match status" value="1"/>
</dbReference>
<dbReference type="FunFam" id="3.40.50.2000:FF:000081">
    <property type="entry name" value="UDP-glucuronosyltransferase 2A2"/>
    <property type="match status" value="1"/>
</dbReference>
<dbReference type="Gene3D" id="3.40.50.2000">
    <property type="entry name" value="Glycogen Phosphorylase B"/>
    <property type="match status" value="2"/>
</dbReference>
<dbReference type="InterPro" id="IPR050271">
    <property type="entry name" value="UDP-glycosyltransferase"/>
</dbReference>
<dbReference type="InterPro" id="IPR002213">
    <property type="entry name" value="UDP_glucos_trans"/>
</dbReference>
<dbReference type="InterPro" id="IPR035595">
    <property type="entry name" value="UDP_glycos_trans_CS"/>
</dbReference>
<dbReference type="PANTHER" id="PTHR48043">
    <property type="entry name" value="EG:EG0003.4 PROTEIN-RELATED"/>
    <property type="match status" value="1"/>
</dbReference>
<dbReference type="PANTHER" id="PTHR48043:SF156">
    <property type="entry name" value="UDP-GLUCURONOSYLTRANSFERASE 2B17"/>
    <property type="match status" value="1"/>
</dbReference>
<dbReference type="Pfam" id="PF00201">
    <property type="entry name" value="UDPGT"/>
    <property type="match status" value="1"/>
</dbReference>
<dbReference type="SUPFAM" id="SSF53756">
    <property type="entry name" value="UDP-Glycosyltransferase/glycogen phosphorylase"/>
    <property type="match status" value="1"/>
</dbReference>
<dbReference type="PROSITE" id="PS00375">
    <property type="entry name" value="UDPGT"/>
    <property type="match status" value="1"/>
</dbReference>
<protein>
    <recommendedName>
        <fullName evidence="9">UDP-glucuronosyltransferase 2B17</fullName>
        <shortName>UDPGT 2B17</shortName>
        <shortName>UGT2B17</shortName>
        <ecNumber evidence="3 4 6 7 8">2.4.1.17</ecNumber>
    </recommendedName>
    <alternativeName>
        <fullName>C19-steroid-specific UDP-glucuronosyltransferase</fullName>
        <shortName>C19-steroid-specific UDPGT</shortName>
    </alternativeName>
</protein>
<sequence>MSLKWMSVFLLMQLSCYFSSGSCGKVLVWPTEYSHWINMKTILEELVQRGHEVIVLTSSASILVNASKSSAIKLEVYPTSLTKNDLEDFFMKMFDRWTYSISKNTFWSYFSQLQELCWEYSDYNIKLCEDAVLNKKLMRKLQESKFDVLLADAVNPCGELLAELLNIPFLYSLRFSVGYTVEKNGGGFLFPPSYVPVVMSELSDQMIFMERIKNMIYMLYFDFWFQAYDLKKWDQFYSEVLGRPTTLFETMGKAEMWLIRTYWDFEFPRPFLPNVDFVGGLHCKPAKPLPKEMEEFVQSSGENGIVVFSLGSMISNMSEESANMIASALAQIPQKVLWRFDGKKPNTLGSNTRLYKWLPQNDLLGHPKTKAFITHGGTNGIYEAIYHGIPMVGIPLFADQHDNIAHMKAKGAALSVDIRTMSSRDLLNALKSVINDPIYKENIMKLSRIHHDQPVKPLDRAVFWIEFVMRHKGAKHLRVAAHNLTWIQYHSLDVIAFLLACVATMIFMITKCCLFCFRKLAKTGKKKKRD</sequence>
<proteinExistence type="evidence at protein level"/>
<gene>
    <name evidence="16" type="primary">UGT2B17</name>
</gene>
<evidence type="ECO:0000250" key="1">
    <source>
        <dbReference type="UniProtKB" id="Q8BWQ1"/>
    </source>
</evidence>
<evidence type="ECO:0000255" key="2"/>
<evidence type="ECO:0000269" key="3">
    <source>
    </source>
</evidence>
<evidence type="ECO:0000269" key="4">
    <source>
    </source>
</evidence>
<evidence type="ECO:0000269" key="5">
    <source>
    </source>
</evidence>
<evidence type="ECO:0000269" key="6">
    <source>
    </source>
</evidence>
<evidence type="ECO:0000269" key="7">
    <source>
    </source>
</evidence>
<evidence type="ECO:0000269" key="8">
    <source>
    </source>
</evidence>
<evidence type="ECO:0000303" key="9">
    <source>
    </source>
</evidence>
<evidence type="ECO:0000305" key="10"/>
<evidence type="ECO:0000305" key="11">
    <source>
    </source>
</evidence>
<evidence type="ECO:0000305" key="12">
    <source>
    </source>
</evidence>
<evidence type="ECO:0000305" key="13">
    <source>
    </source>
</evidence>
<evidence type="ECO:0000305" key="14">
    <source>
    </source>
</evidence>
<evidence type="ECO:0000305" key="15">
    <source>
    </source>
</evidence>
<evidence type="ECO:0000312" key="16">
    <source>
        <dbReference type="HGNC" id="HGNC:12547"/>
    </source>
</evidence>
<evidence type="ECO:0007829" key="17">
    <source>
        <dbReference type="PDB" id="7YAN"/>
    </source>
</evidence>
<reference key="1">
    <citation type="journal article" date="1996" name="J. Biol. Chem.">
        <title>Isolation and characterization of a novel cDNA encoding a human UDP-glucuronosyltransferase active on C19 steroids.</title>
        <authorList>
            <person name="Beaulieu M."/>
            <person name="Levesque E."/>
            <person name="Hum D.W."/>
            <person name="Belanger A."/>
        </authorList>
    </citation>
    <scope>NUCLEOTIDE SEQUENCE [MRNA]</scope>
    <scope>FUNCTION</scope>
    <scope>TISSUE SPECIFICITY</scope>
    <scope>CATALYTIC ACTIVITY</scope>
    <scope>BIOPHYSICOCHEMICAL PROPERTIES</scope>
    <source>
        <tissue>Prostate</tissue>
    </source>
</reference>
<reference key="2">
    <citation type="journal article" date="1997" name="DNA Cell Biol.">
        <title>Chromosomal localization, structure, and regulation of the UGT2B17 gene, encoding a C19 steroid metabolizing enzyme.</title>
        <authorList>
            <person name="Beaulieu M."/>
            <person name="Levesque E."/>
            <person name="Tchernof A."/>
            <person name="Beatty B.G."/>
            <person name="Belanger A."/>
            <person name="Hum D.W."/>
        </authorList>
    </citation>
    <scope>NUCLEOTIDE SEQUENCE [MRNA]</scope>
</reference>
<reference key="3">
    <citation type="journal article" date="2006" name="Drug Metab. Dispos.">
        <title>Human UDP-glucuronosyltransferase, UGT1A8, glucuronidates dihydrotestosterone to a monoglucuronide and further to a structurally novel diglucuronide.</title>
        <authorList>
            <person name="Murai T."/>
            <person name="Samata N."/>
            <person name="Iwabuchi H."/>
            <person name="Ikeda T."/>
        </authorList>
    </citation>
    <scope>FUNCTION</scope>
    <scope>CATALYTIC ACTIVITY</scope>
    <scope>BIOPHYSICOCHEMICAL PROPERTIES</scope>
    <scope>SUBSTRATE SPECIFICITY</scope>
</reference>
<reference key="4">
    <citation type="journal article" date="2008" name="Drug Metab. Dispos.">
        <title>The configuration of the 17-hydroxy group variably influences the glucuronidation of beta-estradiol and epiestradiol by human UDP-glucuronosyltransferases.</title>
        <authorList>
            <person name="Itaeaho K."/>
            <person name="Mackenzie P.I."/>
            <person name="Ikushiro S."/>
            <person name="Miners J.O."/>
            <person name="Finel M."/>
        </authorList>
    </citation>
    <scope>FUNCTION</scope>
    <scope>CATALYTIC ACTIVITY</scope>
    <scope>BIOPHYSICOCHEMICAL PROPERTIES</scope>
</reference>
<reference key="5">
    <citation type="journal article" date="2008" name="Am. J. Hum. Genet.">
        <title>Genome-wide copy-number-variation study identified a susceptibility gene, UGT2B17, for osteoporosis.</title>
        <authorList>
            <person name="Yang T.-L."/>
            <person name="Chen X.-D."/>
            <person name="Guo Y."/>
            <person name="Lei S.-F."/>
            <person name="Wang J.-T."/>
            <person name="Zhou Q."/>
            <person name="Pan F."/>
            <person name="Chen Y."/>
            <person name="Zhang Z.-X."/>
            <person name="Dong S.-S."/>
            <person name="Xu X.-H."/>
            <person name="Yan H."/>
            <person name="Liu X."/>
            <person name="Qiu C."/>
            <person name="Zhu X.-Z."/>
            <person name="Chen T."/>
            <person name="Li M."/>
            <person name="Zhang H."/>
            <person name="Zhang L."/>
            <person name="Drees B.M."/>
            <person name="Hamilton J.J."/>
            <person name="Papasian C.J."/>
            <person name="Recker R.R."/>
            <person name="Song X.-P."/>
            <person name="Cheng J."/>
            <person name="Deng H.-W."/>
        </authorList>
    </citation>
    <scope>INVOLVEMENT IN BONE MINERAL DENSITY VARIANCE</scope>
</reference>
<reference key="6">
    <citation type="journal article" date="2009" name="Drug Metab. Dispos.">
        <title>UDP-glucuronosyltransferases (UGTs) 2B7 and UGT2B17 display converse specificity in testosterone and epitestosterone glucuronidation, whereas UGT2A1 conjugates both androgens similarly.</title>
        <authorList>
            <person name="Sten T."/>
            <person name="Bichlmaier I."/>
            <person name="Kuuranne T."/>
            <person name="Leinonen A."/>
            <person name="Yli-Kauhaluoma J."/>
            <person name="Finel M."/>
        </authorList>
    </citation>
    <scope>FUNCTION</scope>
    <scope>CATALYTIC ACTIVITY</scope>
    <scope>BIOPHYSICOCHEMICAL PROPERTIES</scope>
</reference>
<reference key="7">
    <citation type="journal article" date="2013" name="Drug Metab. Dispos.">
        <title>Regiospecificity and stereospecificity of human UDP-glucuronosyltransferases in the glucuronidation of estriol, 16-epiestriol, 17-epiestriol, and 13-epiestradiol.</title>
        <authorList>
            <person name="Sneitz N."/>
            <person name="Vahermo M."/>
            <person name="Mosorin J."/>
            <person name="Laakkonen L."/>
            <person name="Poirier D."/>
            <person name="Finel M."/>
        </authorList>
    </citation>
    <scope>FUNCTION</scope>
    <scope>CATALYTIC ACTIVITY</scope>
    <scope>BIOPHYSICOCHEMICAL PROPERTIES</scope>
    <scope>SUBSTRATE SPECIFICITY</scope>
</reference>
<reference key="8">
    <citation type="journal article" date="2014" name="J. Proteomics">
        <title>An enzyme assisted RP-RPLC approach for in-depth analysis of human liver phosphoproteome.</title>
        <authorList>
            <person name="Bian Y."/>
            <person name="Song C."/>
            <person name="Cheng K."/>
            <person name="Dong M."/>
            <person name="Wang F."/>
            <person name="Huang J."/>
            <person name="Sun D."/>
            <person name="Wang L."/>
            <person name="Ye M."/>
            <person name="Zou H."/>
        </authorList>
    </citation>
    <scope>IDENTIFICATION BY MASS SPECTROMETRY [LARGE SCALE ANALYSIS]</scope>
    <source>
        <tissue>Liver</tissue>
    </source>
</reference>
<name>UDB17_HUMAN</name>
<feature type="signal peptide" evidence="2">
    <location>
        <begin position="1"/>
        <end position="23"/>
    </location>
</feature>
<feature type="chain" id="PRO_0000036041" description="UDP-glucuronosyltransferase 2B17">
    <location>
        <begin position="24"/>
        <end position="530"/>
    </location>
</feature>
<feature type="transmembrane region" description="Helical" evidence="2">
    <location>
        <begin position="495"/>
        <end position="515"/>
    </location>
</feature>
<feature type="modified residue" description="N6-succinyllysine" evidence="1">
    <location>
        <position position="136"/>
    </location>
</feature>
<feature type="glycosylation site" description="N-linked (GlcNAc...) asparagine" evidence="2">
    <location>
        <position position="65"/>
    </location>
</feature>
<feature type="glycosylation site" description="N-linked (GlcNAc...) asparagine" evidence="2">
    <location>
        <position position="316"/>
    </location>
</feature>
<feature type="glycosylation site" description="N-linked (GlcNAc...) asparagine" evidence="2">
    <location>
        <position position="483"/>
    </location>
</feature>
<feature type="helix" evidence="17">
    <location>
        <begin position="291"/>
        <end position="298"/>
    </location>
</feature>
<feature type="helix" evidence="17">
    <location>
        <begin position="299"/>
        <end position="303"/>
    </location>
</feature>
<feature type="strand" evidence="17">
    <location>
        <begin position="305"/>
        <end position="308"/>
    </location>
</feature>
<feature type="helix" evidence="17">
    <location>
        <begin position="314"/>
        <end position="316"/>
    </location>
</feature>
<feature type="helix" evidence="17">
    <location>
        <begin position="319"/>
        <end position="329"/>
    </location>
</feature>
<feature type="strand" evidence="17">
    <location>
        <begin position="332"/>
        <end position="339"/>
    </location>
</feature>
<feature type="strand" evidence="17">
    <location>
        <begin position="352"/>
        <end position="357"/>
    </location>
</feature>
<feature type="helix" evidence="17">
    <location>
        <begin position="360"/>
        <end position="365"/>
    </location>
</feature>
<feature type="strand" evidence="17">
    <location>
        <begin position="369"/>
        <end position="374"/>
    </location>
</feature>
<feature type="helix" evidence="17">
    <location>
        <begin position="378"/>
        <end position="387"/>
    </location>
</feature>
<feature type="strand" evidence="17">
    <location>
        <begin position="391"/>
        <end position="393"/>
    </location>
</feature>
<feature type="helix" evidence="17">
    <location>
        <begin position="398"/>
        <end position="409"/>
    </location>
</feature>
<feature type="strand" evidence="17">
    <location>
        <begin position="412"/>
        <end position="415"/>
    </location>
</feature>
<feature type="strand" evidence="17">
    <location>
        <begin position="417"/>
        <end position="419"/>
    </location>
</feature>
<feature type="helix" evidence="17">
    <location>
        <begin position="423"/>
        <end position="435"/>
    </location>
</feature>
<feature type="helix" evidence="17">
    <location>
        <begin position="438"/>
        <end position="446"/>
    </location>
</feature>
<organism>
    <name type="scientific">Homo sapiens</name>
    <name type="common">Human</name>
    <dbReference type="NCBI Taxonomy" id="9606"/>
    <lineage>
        <taxon>Eukaryota</taxon>
        <taxon>Metazoa</taxon>
        <taxon>Chordata</taxon>
        <taxon>Craniata</taxon>
        <taxon>Vertebrata</taxon>
        <taxon>Euteleostomi</taxon>
        <taxon>Mammalia</taxon>
        <taxon>Eutheria</taxon>
        <taxon>Euarchontoglires</taxon>
        <taxon>Primates</taxon>
        <taxon>Haplorrhini</taxon>
        <taxon>Catarrhini</taxon>
        <taxon>Hominidae</taxon>
        <taxon>Homo</taxon>
    </lineage>
</organism>
<keyword id="KW-0002">3D-structure</keyword>
<keyword id="KW-0256">Endoplasmic reticulum</keyword>
<keyword id="KW-0325">Glycoprotein</keyword>
<keyword id="KW-0328">Glycosyltransferase</keyword>
<keyword id="KW-0443">Lipid metabolism</keyword>
<keyword id="KW-0472">Membrane</keyword>
<keyword id="KW-1267">Proteomics identification</keyword>
<keyword id="KW-1185">Reference proteome</keyword>
<keyword id="KW-0732">Signal</keyword>
<keyword id="KW-0753">Steroid metabolism</keyword>
<keyword id="KW-0808">Transferase</keyword>
<keyword id="KW-0812">Transmembrane</keyword>
<keyword id="KW-1133">Transmembrane helix</keyword>